<protein>
    <recommendedName>
        <fullName evidence="1">Arabinose import ATP-binding protein AraG</fullName>
        <ecNumber evidence="1">7.5.2.12</ecNumber>
    </recommendedName>
</protein>
<proteinExistence type="inferred from homology"/>
<accession>Q3K8M7</accession>
<evidence type="ECO:0000255" key="1">
    <source>
        <dbReference type="HAMAP-Rule" id="MF_01721"/>
    </source>
</evidence>
<name>ARAG_PSEPF</name>
<keyword id="KW-0067">ATP-binding</keyword>
<keyword id="KW-0997">Cell inner membrane</keyword>
<keyword id="KW-1003">Cell membrane</keyword>
<keyword id="KW-0472">Membrane</keyword>
<keyword id="KW-0547">Nucleotide-binding</keyword>
<keyword id="KW-0677">Repeat</keyword>
<keyword id="KW-0762">Sugar transport</keyword>
<keyword id="KW-1278">Translocase</keyword>
<keyword id="KW-0813">Transport</keyword>
<gene>
    <name evidence="1" type="primary">araG</name>
    <name type="ordered locus">Pfl01_4140</name>
</gene>
<feature type="chain" id="PRO_0000270470" description="Arabinose import ATP-binding protein AraG">
    <location>
        <begin position="1"/>
        <end position="514"/>
    </location>
</feature>
<feature type="domain" description="ABC transporter 1" evidence="1">
    <location>
        <begin position="16"/>
        <end position="251"/>
    </location>
</feature>
<feature type="domain" description="ABC transporter 2" evidence="1">
    <location>
        <begin position="251"/>
        <end position="507"/>
    </location>
</feature>
<feature type="binding site" evidence="1">
    <location>
        <begin position="48"/>
        <end position="55"/>
    </location>
    <ligand>
        <name>ATP</name>
        <dbReference type="ChEBI" id="CHEBI:30616"/>
    </ligand>
</feature>
<reference key="1">
    <citation type="journal article" date="2009" name="Genome Biol.">
        <title>Genomic and genetic analyses of diversity and plant interactions of Pseudomonas fluorescens.</title>
        <authorList>
            <person name="Silby M.W."/>
            <person name="Cerdeno-Tarraga A.M."/>
            <person name="Vernikos G.S."/>
            <person name="Giddens S.R."/>
            <person name="Jackson R.W."/>
            <person name="Preston G.M."/>
            <person name="Zhang X.-X."/>
            <person name="Moon C.D."/>
            <person name="Gehrig S.M."/>
            <person name="Godfrey S.A.C."/>
            <person name="Knight C.G."/>
            <person name="Malone J.G."/>
            <person name="Robinson Z."/>
            <person name="Spiers A.J."/>
            <person name="Harris S."/>
            <person name="Challis G.L."/>
            <person name="Yaxley A.M."/>
            <person name="Harris D."/>
            <person name="Seeger K."/>
            <person name="Murphy L."/>
            <person name="Rutter S."/>
            <person name="Squares R."/>
            <person name="Quail M.A."/>
            <person name="Saunders E."/>
            <person name="Mavromatis K."/>
            <person name="Brettin T.S."/>
            <person name="Bentley S.D."/>
            <person name="Hothersall J."/>
            <person name="Stephens E."/>
            <person name="Thomas C.M."/>
            <person name="Parkhill J."/>
            <person name="Levy S.B."/>
            <person name="Rainey P.B."/>
            <person name="Thomson N.R."/>
        </authorList>
    </citation>
    <scope>NUCLEOTIDE SEQUENCE [LARGE SCALE GENOMIC DNA]</scope>
    <source>
        <strain>Pf0-1</strain>
    </source>
</reference>
<sequence>MHAQVQTQEHSASGSLRFNGIGKTFPGVKALDGISFVAHPGQVHALMGENGAGKSTLLKILGGAYIPSSGELQIGEQTMAFKSTADSIGSGVAVIHQELHLVPEMTVAENLFLGHLPASFGLINRGALRQQALACLKGLADEIDPQTKVGRLSLGQRQLVEIAKALSRGAHVIAFDEPTSSLSAREIDRLMAIIGRLRDEGKVVLYVSHRMEEVFRICDAVTVFKDGRYVRTFDDMSQLTHDQLVTCMVGRDIQDIYDYRGRPRGAVALRVDGLLGPGLREPISFDAHKGEILGLFGLVGAGRTELFRLLSGLERNTAGRLELRGHELKLRSPRDAIAAGILLCPEDRKKEGIIPLASVAENINISARGAHSGLGCLLRGIWEKGNAEKQIKALKVKTPHAGQQIKFLSGGNQQKAILGRWLSMPMKVLLLDEPTRGIDIGAKAEIYQIIHNLAADGISVIVVSSDLMEVMGISDRILVLCEGALRGEVSRDQANESNLLQLALPRHRADGVAN</sequence>
<organism>
    <name type="scientific">Pseudomonas fluorescens (strain Pf0-1)</name>
    <dbReference type="NCBI Taxonomy" id="205922"/>
    <lineage>
        <taxon>Bacteria</taxon>
        <taxon>Pseudomonadati</taxon>
        <taxon>Pseudomonadota</taxon>
        <taxon>Gammaproteobacteria</taxon>
        <taxon>Pseudomonadales</taxon>
        <taxon>Pseudomonadaceae</taxon>
        <taxon>Pseudomonas</taxon>
    </lineage>
</organism>
<comment type="function">
    <text evidence="1">Part of the ABC transporter complex AraFGH involved in arabinose import. Responsible for energy coupling to the transport system.</text>
</comment>
<comment type="catalytic activity">
    <reaction evidence="1">
        <text>L-arabinose(out) + ATP + H2O = L-arabinose(in) + ADP + phosphate + H(+)</text>
        <dbReference type="Rhea" id="RHEA:30007"/>
        <dbReference type="ChEBI" id="CHEBI:15377"/>
        <dbReference type="ChEBI" id="CHEBI:15378"/>
        <dbReference type="ChEBI" id="CHEBI:17535"/>
        <dbReference type="ChEBI" id="CHEBI:30616"/>
        <dbReference type="ChEBI" id="CHEBI:43474"/>
        <dbReference type="ChEBI" id="CHEBI:456216"/>
        <dbReference type="EC" id="7.5.2.12"/>
    </reaction>
</comment>
<comment type="subunit">
    <text evidence="1">The complex is composed of two ATP-binding proteins (AraG), two transmembrane proteins (AraH) and a solute-binding protein (AraF).</text>
</comment>
<comment type="subcellular location">
    <subcellularLocation>
        <location evidence="1">Cell inner membrane</location>
        <topology evidence="1">Peripheral membrane protein</topology>
    </subcellularLocation>
</comment>
<comment type="similarity">
    <text evidence="1">Belongs to the ABC transporter superfamily. Arabinose importer (TC 3.A.1.2.2) family.</text>
</comment>
<dbReference type="EC" id="7.5.2.12" evidence="1"/>
<dbReference type="EMBL" id="CP000094">
    <property type="protein sequence ID" value="ABA75877.1"/>
    <property type="molecule type" value="Genomic_DNA"/>
</dbReference>
<dbReference type="RefSeq" id="WP_011335423.1">
    <property type="nucleotide sequence ID" value="NC_007492.2"/>
</dbReference>
<dbReference type="SMR" id="Q3K8M7"/>
<dbReference type="KEGG" id="pfo:Pfl01_4140"/>
<dbReference type="eggNOG" id="COG1129">
    <property type="taxonomic scope" value="Bacteria"/>
</dbReference>
<dbReference type="HOGENOM" id="CLU_000604_92_3_6"/>
<dbReference type="Proteomes" id="UP000002704">
    <property type="component" value="Chromosome"/>
</dbReference>
<dbReference type="GO" id="GO:0005886">
    <property type="term" value="C:plasma membrane"/>
    <property type="evidence" value="ECO:0007669"/>
    <property type="project" value="UniProtKB-SubCell"/>
</dbReference>
<dbReference type="GO" id="GO:0015612">
    <property type="term" value="F:ABC-type L-arabinose transporter activity"/>
    <property type="evidence" value="ECO:0007669"/>
    <property type="project" value="UniProtKB-EC"/>
</dbReference>
<dbReference type="GO" id="GO:0005524">
    <property type="term" value="F:ATP binding"/>
    <property type="evidence" value="ECO:0007669"/>
    <property type="project" value="UniProtKB-KW"/>
</dbReference>
<dbReference type="GO" id="GO:0016887">
    <property type="term" value="F:ATP hydrolysis activity"/>
    <property type="evidence" value="ECO:0007669"/>
    <property type="project" value="InterPro"/>
</dbReference>
<dbReference type="CDD" id="cd03216">
    <property type="entry name" value="ABC_Carb_Monos_I"/>
    <property type="match status" value="1"/>
</dbReference>
<dbReference type="CDD" id="cd03215">
    <property type="entry name" value="ABC_Carb_Monos_II"/>
    <property type="match status" value="1"/>
</dbReference>
<dbReference type="FunFam" id="3.40.50.300:FF:000126">
    <property type="entry name" value="Galactose/methyl galactoside import ATP-binding protein MglA"/>
    <property type="match status" value="1"/>
</dbReference>
<dbReference type="FunFam" id="3.40.50.300:FF:000127">
    <property type="entry name" value="Ribose import ATP-binding protein RbsA"/>
    <property type="match status" value="1"/>
</dbReference>
<dbReference type="Gene3D" id="3.40.50.300">
    <property type="entry name" value="P-loop containing nucleotide triphosphate hydrolases"/>
    <property type="match status" value="2"/>
</dbReference>
<dbReference type="InterPro" id="IPR003593">
    <property type="entry name" value="AAA+_ATPase"/>
</dbReference>
<dbReference type="InterPro" id="IPR050107">
    <property type="entry name" value="ABC_carbohydrate_import_ATPase"/>
</dbReference>
<dbReference type="InterPro" id="IPR003439">
    <property type="entry name" value="ABC_transporter-like_ATP-bd"/>
</dbReference>
<dbReference type="InterPro" id="IPR017871">
    <property type="entry name" value="ABC_transporter-like_CS"/>
</dbReference>
<dbReference type="InterPro" id="IPR027417">
    <property type="entry name" value="P-loop_NTPase"/>
</dbReference>
<dbReference type="NCBIfam" id="NF008442">
    <property type="entry name" value="PRK11288.1"/>
    <property type="match status" value="1"/>
</dbReference>
<dbReference type="PANTHER" id="PTHR43790:SF6">
    <property type="entry name" value="ARABINOSE IMPORT ATP-BINDING PROTEIN ARAG"/>
    <property type="match status" value="1"/>
</dbReference>
<dbReference type="PANTHER" id="PTHR43790">
    <property type="entry name" value="CARBOHYDRATE TRANSPORT ATP-BINDING PROTEIN MG119-RELATED"/>
    <property type="match status" value="1"/>
</dbReference>
<dbReference type="Pfam" id="PF00005">
    <property type="entry name" value="ABC_tran"/>
    <property type="match status" value="2"/>
</dbReference>
<dbReference type="SMART" id="SM00382">
    <property type="entry name" value="AAA"/>
    <property type="match status" value="2"/>
</dbReference>
<dbReference type="SUPFAM" id="SSF52540">
    <property type="entry name" value="P-loop containing nucleoside triphosphate hydrolases"/>
    <property type="match status" value="2"/>
</dbReference>
<dbReference type="PROSITE" id="PS00211">
    <property type="entry name" value="ABC_TRANSPORTER_1"/>
    <property type="match status" value="2"/>
</dbReference>
<dbReference type="PROSITE" id="PS50893">
    <property type="entry name" value="ABC_TRANSPORTER_2"/>
    <property type="match status" value="2"/>
</dbReference>
<dbReference type="PROSITE" id="PS51268">
    <property type="entry name" value="ARAG"/>
    <property type="match status" value="1"/>
</dbReference>